<keyword id="KW-1015">Disulfide bond</keyword>
<keyword id="KW-0325">Glycoprotein</keyword>
<keyword id="KW-0378">Hydrolase</keyword>
<keyword id="KW-0645">Protease</keyword>
<keyword id="KW-1185">Reference proteome</keyword>
<keyword id="KW-0964">Secreted</keyword>
<keyword id="KW-0720">Serine protease</keyword>
<keyword id="KW-0732">Signal</keyword>
<name>PRS29_MOUSE</name>
<protein>
    <recommendedName>
        <fullName>Serine protease 29</fullName>
        <ecNumber>3.4.21.-</ecNumber>
    </recommendedName>
    <alternativeName>
        <fullName>Implantation serine proteinase 2</fullName>
        <shortName>ISP-2</shortName>
    </alternativeName>
    <alternativeName>
        <fullName>Strypsin-2</fullName>
    </alternativeName>
    <alternativeName>
        <fullName>Strypsin-related protein</fullName>
    </alternativeName>
    <alternativeName>
        <fullName>Tryptase-like proteinase</fullName>
    </alternativeName>
</protein>
<sequence>MLIQLCLTLFFLGCSIAGTPAPGPEDVLMGIVGGHSAPQGKWPWQVSLRIYRYYWAFWVHNCGGSIIHPQWVLTAAHCIRERDADPSVFRIRVGEAYLYGGKELLSVSRVIIHPDFVHAGLGSDVALLQLAVSVQSFPNVKPVKLPSESLEVTKKDVCWVTGWGAVSTHRSLPPPYRLQQVQVKIIDNSLCEEMYHNATRHRNRGQKLILKDMLCAGNQGQDSCYGDSGGPLVCNVTGSWTLVGVVSWGYGCALRDFPGVYARVQSFLPWITQQMQRFS</sequence>
<feature type="signal peptide" evidence="2">
    <location>
        <begin position="1"/>
        <end position="17"/>
    </location>
</feature>
<feature type="chain" id="PRO_0000349226" description="Serine protease 29">
    <location>
        <begin position="18"/>
        <end position="279"/>
    </location>
</feature>
<feature type="domain" description="Peptidase S1" evidence="3">
    <location>
        <begin position="31"/>
        <end position="276"/>
    </location>
</feature>
<feature type="active site" description="Charge relay system" evidence="1">
    <location>
        <position position="77"/>
    </location>
</feature>
<feature type="active site" description="Charge relay system" evidence="1">
    <location>
        <position position="124"/>
    </location>
</feature>
<feature type="active site" description="Charge relay system" evidence="1">
    <location>
        <position position="228"/>
    </location>
</feature>
<feature type="glycosylation site" description="N-linked (GlcNAc...) asparagine" evidence="2">
    <location>
        <position position="197"/>
    </location>
</feature>
<feature type="glycosylation site" description="N-linked (GlcNAc...) asparagine" evidence="2">
    <location>
        <position position="235"/>
    </location>
</feature>
<feature type="disulfide bond" evidence="3">
    <location>
        <begin position="62"/>
        <end position="78"/>
    </location>
</feature>
<feature type="disulfide bond" evidence="3">
    <location>
        <begin position="158"/>
        <end position="234"/>
    </location>
</feature>
<feature type="disulfide bond" evidence="3">
    <location>
        <begin position="191"/>
        <end position="215"/>
    </location>
</feature>
<feature type="disulfide bond" evidence="3">
    <location>
        <begin position="224"/>
        <end position="252"/>
    </location>
</feature>
<feature type="sequence conflict" description="In Ref. 5; AAI04124." evidence="10" ref="5">
    <original>M</original>
    <variation>L</variation>
    <location>
        <position position="1"/>
    </location>
</feature>
<feature type="sequence conflict" description="In Ref. 4; BAE25852." evidence="10" ref="4">
    <original>D</original>
    <variation>G</variation>
    <location>
        <position position="26"/>
    </location>
</feature>
<feature type="sequence conflict" description="In Ref. 4; BAE25852." evidence="10" ref="4">
    <original>P</original>
    <variation>S</variation>
    <location>
        <position position="269"/>
    </location>
</feature>
<evidence type="ECO:0000250" key="1"/>
<evidence type="ECO:0000255" key="2"/>
<evidence type="ECO:0000255" key="3">
    <source>
        <dbReference type="PROSITE-ProRule" id="PRU00274"/>
    </source>
</evidence>
<evidence type="ECO:0000269" key="4">
    <source>
    </source>
</evidence>
<evidence type="ECO:0000269" key="5">
    <source>
    </source>
</evidence>
<evidence type="ECO:0000269" key="6">
    <source>
    </source>
</evidence>
<evidence type="ECO:0000269" key="7">
    <source>
    </source>
</evidence>
<evidence type="ECO:0000269" key="8">
    <source>
    </source>
</evidence>
<evidence type="ECO:0000269" key="9">
    <source>
    </source>
</evidence>
<evidence type="ECO:0000305" key="10"/>
<organism>
    <name type="scientific">Mus musculus</name>
    <name type="common">Mouse</name>
    <dbReference type="NCBI Taxonomy" id="10090"/>
    <lineage>
        <taxon>Eukaryota</taxon>
        <taxon>Metazoa</taxon>
        <taxon>Chordata</taxon>
        <taxon>Craniata</taxon>
        <taxon>Vertebrata</taxon>
        <taxon>Euteleostomi</taxon>
        <taxon>Mammalia</taxon>
        <taxon>Eutheria</taxon>
        <taxon>Euarchontoglires</taxon>
        <taxon>Glires</taxon>
        <taxon>Rodentia</taxon>
        <taxon>Myomorpha</taxon>
        <taxon>Muroidea</taxon>
        <taxon>Muridae</taxon>
        <taxon>Murinae</taxon>
        <taxon>Mus</taxon>
        <taxon>Mus</taxon>
    </lineage>
</organism>
<gene>
    <name type="primary">Prss29</name>
    <name type="synonym">Isp2</name>
</gene>
<dbReference type="EC" id="3.4.21.-"/>
<dbReference type="EMBL" id="AF305425">
    <property type="protein sequence ID" value="AAK15264.2"/>
    <property type="molecule type" value="mRNA"/>
</dbReference>
<dbReference type="EMBL" id="AF442819">
    <property type="protein sequence ID" value="AAL38005.1"/>
    <property type="molecule type" value="mRNA"/>
</dbReference>
<dbReference type="EMBL" id="AY520825">
    <property type="protein sequence ID" value="AAT66744.1"/>
    <property type="molecule type" value="Genomic_DNA"/>
</dbReference>
<dbReference type="EMBL" id="AK144368">
    <property type="protein sequence ID" value="BAE25852.1"/>
    <property type="molecule type" value="mRNA"/>
</dbReference>
<dbReference type="EMBL" id="BC104122">
    <property type="protein sequence ID" value="AAI04123.1"/>
    <property type="molecule type" value="mRNA"/>
</dbReference>
<dbReference type="EMBL" id="BC104123">
    <property type="protein sequence ID" value="AAI04124.1"/>
    <property type="molecule type" value="mRNA"/>
</dbReference>
<dbReference type="CCDS" id="CCDS28516.1"/>
<dbReference type="RefSeq" id="NP_444490.2">
    <property type="nucleotide sequence ID" value="NM_053260.3"/>
</dbReference>
<dbReference type="SMR" id="Q99MS4"/>
<dbReference type="FunCoup" id="Q99MS4">
    <property type="interactions" value="98"/>
</dbReference>
<dbReference type="STRING" id="10090.ENSMUSP00000024993"/>
<dbReference type="MEROPS" id="S01.315"/>
<dbReference type="GlyCosmos" id="Q99MS4">
    <property type="glycosylation" value="2 sites, No reported glycans"/>
</dbReference>
<dbReference type="GlyGen" id="Q99MS4">
    <property type="glycosylation" value="2 sites"/>
</dbReference>
<dbReference type="jPOST" id="Q99MS4"/>
<dbReference type="PaxDb" id="10090-ENSMUSP00000024993"/>
<dbReference type="ProteomicsDB" id="291749"/>
<dbReference type="DNASU" id="114662"/>
<dbReference type="GeneID" id="114662"/>
<dbReference type="KEGG" id="mmu:114662"/>
<dbReference type="AGR" id="MGI:2149952"/>
<dbReference type="CTD" id="114662"/>
<dbReference type="MGI" id="MGI:2149952">
    <property type="gene designation" value="Prss29"/>
</dbReference>
<dbReference type="eggNOG" id="KOG3627">
    <property type="taxonomic scope" value="Eukaryota"/>
</dbReference>
<dbReference type="InParanoid" id="Q99MS4"/>
<dbReference type="OrthoDB" id="93664at2759"/>
<dbReference type="PhylomeDB" id="Q99MS4"/>
<dbReference type="BioGRID-ORCS" id="114662">
    <property type="hits" value="3 hits in 77 CRISPR screens"/>
</dbReference>
<dbReference type="PRO" id="PR:Q99MS4"/>
<dbReference type="Proteomes" id="UP000000589">
    <property type="component" value="Unplaced"/>
</dbReference>
<dbReference type="RNAct" id="Q99MS4">
    <property type="molecule type" value="protein"/>
</dbReference>
<dbReference type="GO" id="GO:0005615">
    <property type="term" value="C:extracellular space"/>
    <property type="evidence" value="ECO:0000314"/>
    <property type="project" value="MGI"/>
</dbReference>
<dbReference type="GO" id="GO:0004252">
    <property type="term" value="F:serine-type endopeptidase activity"/>
    <property type="evidence" value="ECO:0007669"/>
    <property type="project" value="InterPro"/>
</dbReference>
<dbReference type="GO" id="GO:0008236">
    <property type="term" value="F:serine-type peptidase activity"/>
    <property type="evidence" value="ECO:0000314"/>
    <property type="project" value="MGI"/>
</dbReference>
<dbReference type="GO" id="GO:0001835">
    <property type="term" value="P:blastocyst hatching"/>
    <property type="evidence" value="ECO:0000315"/>
    <property type="project" value="MGI"/>
</dbReference>
<dbReference type="GO" id="GO:0007566">
    <property type="term" value="P:embryo implantation"/>
    <property type="evidence" value="ECO:0000316"/>
    <property type="project" value="MGI"/>
</dbReference>
<dbReference type="GO" id="GO:0006508">
    <property type="term" value="P:proteolysis"/>
    <property type="evidence" value="ECO:0000314"/>
    <property type="project" value="MGI"/>
</dbReference>
<dbReference type="CDD" id="cd00190">
    <property type="entry name" value="Tryp_SPc"/>
    <property type="match status" value="1"/>
</dbReference>
<dbReference type="FunFam" id="2.40.10.10:FF:000039">
    <property type="entry name" value="Brain-specific serine protease 4"/>
    <property type="match status" value="1"/>
</dbReference>
<dbReference type="Gene3D" id="2.40.10.10">
    <property type="entry name" value="Trypsin-like serine proteases"/>
    <property type="match status" value="2"/>
</dbReference>
<dbReference type="InterPro" id="IPR009003">
    <property type="entry name" value="Peptidase_S1_PA"/>
</dbReference>
<dbReference type="InterPro" id="IPR043504">
    <property type="entry name" value="Peptidase_S1_PA_chymotrypsin"/>
</dbReference>
<dbReference type="InterPro" id="IPR001314">
    <property type="entry name" value="Peptidase_S1A"/>
</dbReference>
<dbReference type="InterPro" id="IPR001254">
    <property type="entry name" value="Trypsin_dom"/>
</dbReference>
<dbReference type="InterPro" id="IPR018114">
    <property type="entry name" value="TRYPSIN_HIS"/>
</dbReference>
<dbReference type="InterPro" id="IPR033116">
    <property type="entry name" value="TRYPSIN_SER"/>
</dbReference>
<dbReference type="PANTHER" id="PTHR24253:SF144">
    <property type="entry name" value="CHYMOTRYPSIN-LIKE PROTEASE CTRL-1-RELATED"/>
    <property type="match status" value="1"/>
</dbReference>
<dbReference type="PANTHER" id="PTHR24253">
    <property type="entry name" value="TRANSMEMBRANE PROTEASE SERINE"/>
    <property type="match status" value="1"/>
</dbReference>
<dbReference type="Pfam" id="PF00089">
    <property type="entry name" value="Trypsin"/>
    <property type="match status" value="1"/>
</dbReference>
<dbReference type="PRINTS" id="PR00722">
    <property type="entry name" value="CHYMOTRYPSIN"/>
</dbReference>
<dbReference type="SMART" id="SM00020">
    <property type="entry name" value="Tryp_SPc"/>
    <property type="match status" value="1"/>
</dbReference>
<dbReference type="SUPFAM" id="SSF50494">
    <property type="entry name" value="Trypsin-like serine proteases"/>
    <property type="match status" value="1"/>
</dbReference>
<dbReference type="PROSITE" id="PS50240">
    <property type="entry name" value="TRYPSIN_DOM"/>
    <property type="match status" value="1"/>
</dbReference>
<dbReference type="PROSITE" id="PS00134">
    <property type="entry name" value="TRYPSIN_HIS"/>
    <property type="match status" value="1"/>
</dbReference>
<dbReference type="PROSITE" id="PS00135">
    <property type="entry name" value="TRYPSIN_SER"/>
    <property type="match status" value="1"/>
</dbReference>
<accession>Q99MS4</accession>
<accession>Q3MI54</accession>
<accession>Q3UN95</accession>
<reference key="1">
    <citation type="journal article" date="2001" name="Reproduction">
        <title>Regulation of the strypsin-related proteinase ISP2 by progesterone in endometrial gland epithelium during implantation in mice.</title>
        <authorList>
            <person name="O'Sullivan C.M."/>
            <person name="Liu S.Y."/>
            <person name="Rancourt S.L."/>
            <person name="Rancourt D.E."/>
        </authorList>
    </citation>
    <scope>NUCLEOTIDE SEQUENCE [MRNA]</scope>
    <scope>TISSUE SPECIFICITY</scope>
    <scope>DEVELOPMENTAL STAGE</scope>
    <scope>INDUCTION</scope>
    <scope>FUNCTION</scope>
    <source>
        <strain>129/SvJ</strain>
        <tissue>Embryo</tissue>
    </source>
</reference>
<reference key="2">
    <citation type="journal article" date="2003" name="Sheng Wu Hua Xue Yu Sheng Wu Wu Li Xue Bao">
        <title>Cloning, expression, and antibody production of mouse ISP2.</title>
        <authorList>
            <person name="Huang Z.P."/>
            <person name="Wang J."/>
            <person name="Yu H."/>
            <person name="Shen W.X."/>
            <person name="Huang P."/>
            <person name="Tso J.K."/>
            <person name="Yang Z.M."/>
            <person name="Shen Q.X."/>
        </authorList>
    </citation>
    <scope>NUCLEOTIDE SEQUENCE [MRNA]</scope>
    <scope>DEVELOPMENTAL STAGE</scope>
    <source>
        <strain>BALB/cJ</strain>
        <tissue>Uterus</tissue>
    </source>
</reference>
<reference key="3">
    <citation type="journal article" date="2004" name="Mol. Reprod. Dev.">
        <title>Origin of the murine implantation serine proteinase subfamily.</title>
        <authorList>
            <person name="O'Sullivan C.M."/>
            <person name="Tang L."/>
            <person name="Xu H."/>
            <person name="Liu S."/>
            <person name="Rancourt D.E."/>
        </authorList>
    </citation>
    <scope>NUCLEOTIDE SEQUENCE [GENOMIC DNA]</scope>
</reference>
<reference key="4">
    <citation type="journal article" date="2005" name="Science">
        <title>The transcriptional landscape of the mammalian genome.</title>
        <authorList>
            <person name="Carninci P."/>
            <person name="Kasukawa T."/>
            <person name="Katayama S."/>
            <person name="Gough J."/>
            <person name="Frith M.C."/>
            <person name="Maeda N."/>
            <person name="Oyama R."/>
            <person name="Ravasi T."/>
            <person name="Lenhard B."/>
            <person name="Wells C."/>
            <person name="Kodzius R."/>
            <person name="Shimokawa K."/>
            <person name="Bajic V.B."/>
            <person name="Brenner S.E."/>
            <person name="Batalov S."/>
            <person name="Forrest A.R."/>
            <person name="Zavolan M."/>
            <person name="Davis M.J."/>
            <person name="Wilming L.G."/>
            <person name="Aidinis V."/>
            <person name="Allen J.E."/>
            <person name="Ambesi-Impiombato A."/>
            <person name="Apweiler R."/>
            <person name="Aturaliya R.N."/>
            <person name="Bailey T.L."/>
            <person name="Bansal M."/>
            <person name="Baxter L."/>
            <person name="Beisel K.W."/>
            <person name="Bersano T."/>
            <person name="Bono H."/>
            <person name="Chalk A.M."/>
            <person name="Chiu K.P."/>
            <person name="Choudhary V."/>
            <person name="Christoffels A."/>
            <person name="Clutterbuck D.R."/>
            <person name="Crowe M.L."/>
            <person name="Dalla E."/>
            <person name="Dalrymple B.P."/>
            <person name="de Bono B."/>
            <person name="Della Gatta G."/>
            <person name="di Bernardo D."/>
            <person name="Down T."/>
            <person name="Engstrom P."/>
            <person name="Fagiolini M."/>
            <person name="Faulkner G."/>
            <person name="Fletcher C.F."/>
            <person name="Fukushima T."/>
            <person name="Furuno M."/>
            <person name="Futaki S."/>
            <person name="Gariboldi M."/>
            <person name="Georgii-Hemming P."/>
            <person name="Gingeras T.R."/>
            <person name="Gojobori T."/>
            <person name="Green R.E."/>
            <person name="Gustincich S."/>
            <person name="Harbers M."/>
            <person name="Hayashi Y."/>
            <person name="Hensch T.K."/>
            <person name="Hirokawa N."/>
            <person name="Hill D."/>
            <person name="Huminiecki L."/>
            <person name="Iacono M."/>
            <person name="Ikeo K."/>
            <person name="Iwama A."/>
            <person name="Ishikawa T."/>
            <person name="Jakt M."/>
            <person name="Kanapin A."/>
            <person name="Katoh M."/>
            <person name="Kawasawa Y."/>
            <person name="Kelso J."/>
            <person name="Kitamura H."/>
            <person name="Kitano H."/>
            <person name="Kollias G."/>
            <person name="Krishnan S.P."/>
            <person name="Kruger A."/>
            <person name="Kummerfeld S.K."/>
            <person name="Kurochkin I.V."/>
            <person name="Lareau L.F."/>
            <person name="Lazarevic D."/>
            <person name="Lipovich L."/>
            <person name="Liu J."/>
            <person name="Liuni S."/>
            <person name="McWilliam S."/>
            <person name="Madan Babu M."/>
            <person name="Madera M."/>
            <person name="Marchionni L."/>
            <person name="Matsuda H."/>
            <person name="Matsuzawa S."/>
            <person name="Miki H."/>
            <person name="Mignone F."/>
            <person name="Miyake S."/>
            <person name="Morris K."/>
            <person name="Mottagui-Tabar S."/>
            <person name="Mulder N."/>
            <person name="Nakano N."/>
            <person name="Nakauchi H."/>
            <person name="Ng P."/>
            <person name="Nilsson R."/>
            <person name="Nishiguchi S."/>
            <person name="Nishikawa S."/>
            <person name="Nori F."/>
            <person name="Ohara O."/>
            <person name="Okazaki Y."/>
            <person name="Orlando V."/>
            <person name="Pang K.C."/>
            <person name="Pavan W.J."/>
            <person name="Pavesi G."/>
            <person name="Pesole G."/>
            <person name="Petrovsky N."/>
            <person name="Piazza S."/>
            <person name="Reed J."/>
            <person name="Reid J.F."/>
            <person name="Ring B.Z."/>
            <person name="Ringwald M."/>
            <person name="Rost B."/>
            <person name="Ruan Y."/>
            <person name="Salzberg S.L."/>
            <person name="Sandelin A."/>
            <person name="Schneider C."/>
            <person name="Schoenbach C."/>
            <person name="Sekiguchi K."/>
            <person name="Semple C.A."/>
            <person name="Seno S."/>
            <person name="Sessa L."/>
            <person name="Sheng Y."/>
            <person name="Shibata Y."/>
            <person name="Shimada H."/>
            <person name="Shimada K."/>
            <person name="Silva D."/>
            <person name="Sinclair B."/>
            <person name="Sperling S."/>
            <person name="Stupka E."/>
            <person name="Sugiura K."/>
            <person name="Sultana R."/>
            <person name="Takenaka Y."/>
            <person name="Taki K."/>
            <person name="Tammoja K."/>
            <person name="Tan S.L."/>
            <person name="Tang S."/>
            <person name="Taylor M.S."/>
            <person name="Tegner J."/>
            <person name="Teichmann S.A."/>
            <person name="Ueda H.R."/>
            <person name="van Nimwegen E."/>
            <person name="Verardo R."/>
            <person name="Wei C.L."/>
            <person name="Yagi K."/>
            <person name="Yamanishi H."/>
            <person name="Zabarovsky E."/>
            <person name="Zhu S."/>
            <person name="Zimmer A."/>
            <person name="Hide W."/>
            <person name="Bult C."/>
            <person name="Grimmond S.M."/>
            <person name="Teasdale R.D."/>
            <person name="Liu E.T."/>
            <person name="Brusic V."/>
            <person name="Quackenbush J."/>
            <person name="Wahlestedt C."/>
            <person name="Mattick J.S."/>
            <person name="Hume D.A."/>
            <person name="Kai C."/>
            <person name="Sasaki D."/>
            <person name="Tomaru Y."/>
            <person name="Fukuda S."/>
            <person name="Kanamori-Katayama M."/>
            <person name="Suzuki M."/>
            <person name="Aoki J."/>
            <person name="Arakawa T."/>
            <person name="Iida J."/>
            <person name="Imamura K."/>
            <person name="Itoh M."/>
            <person name="Kato T."/>
            <person name="Kawaji H."/>
            <person name="Kawagashira N."/>
            <person name="Kawashima T."/>
            <person name="Kojima M."/>
            <person name="Kondo S."/>
            <person name="Konno H."/>
            <person name="Nakano K."/>
            <person name="Ninomiya N."/>
            <person name="Nishio T."/>
            <person name="Okada M."/>
            <person name="Plessy C."/>
            <person name="Shibata K."/>
            <person name="Shiraki T."/>
            <person name="Suzuki S."/>
            <person name="Tagami M."/>
            <person name="Waki K."/>
            <person name="Watahiki A."/>
            <person name="Okamura-Oho Y."/>
            <person name="Suzuki H."/>
            <person name="Kawai J."/>
            <person name="Hayashizaki Y."/>
        </authorList>
    </citation>
    <scope>NUCLEOTIDE SEQUENCE [LARGE SCALE MRNA]</scope>
    <source>
        <strain>C57BL/6J</strain>
        <tissue>Ovary</tissue>
        <tissue>Uterus</tissue>
    </source>
</reference>
<reference key="5">
    <citation type="journal article" date="2004" name="Genome Res.">
        <title>The status, quality, and expansion of the NIH full-length cDNA project: the Mammalian Gene Collection (MGC).</title>
        <authorList>
            <consortium name="The MGC Project Team"/>
        </authorList>
    </citation>
    <scope>NUCLEOTIDE SEQUENCE [LARGE SCALE MRNA]</scope>
</reference>
<reference key="6">
    <citation type="journal article" date="2002" name="Mol. Reprod. Dev.">
        <title>Embryonic hatching enzyme strypsin/ISP1 is expressed with ISP2 in endometrial glands during implantation.</title>
        <authorList>
            <person name="O'Sullivan C.M."/>
            <person name="Liu S.Y."/>
            <person name="Karpinka J.B."/>
            <person name="Rancourt D.E."/>
        </authorList>
    </citation>
    <scope>TISSUE SPECIFICITY</scope>
    <scope>SUBCELLULAR LOCATION</scope>
    <scope>SUBUNIT</scope>
</reference>
<reference key="7">
    <citation type="journal article" date="2004" name="Mol. Reprod. Dev.">
        <title>Uterine secretion of ISP1 &amp; 2 tryptases is regulated by progesterone and estrogen during pregnancy and the endometrial cycle.</title>
        <authorList>
            <person name="O'Sullivan C.M."/>
            <person name="Ungarian J.L."/>
            <person name="Singh K."/>
            <person name="Liu S."/>
            <person name="Hance J."/>
            <person name="Rancourt D.E."/>
        </authorList>
    </citation>
    <scope>SUBCELLULAR LOCATION</scope>
    <scope>INDUCTION</scope>
    <scope>SUBUNIT</scope>
    <scope>DEVELOPMENTAL STAGE</scope>
</reference>
<reference key="8">
    <citation type="journal article" date="2004" name="Reprod. Fertil. Dev.">
        <title>Uterine expression of implantation serine proteinase 2 during the implantation period and in vivo inhibitory effect of its antibody on embryo implantation in mice.</title>
        <authorList>
            <person name="Huang Z.P."/>
            <person name="Yu H."/>
            <person name="Yang Z.M."/>
            <person name="Shen W.X."/>
            <person name="Wang J."/>
            <person name="Shen Q.X."/>
        </authorList>
    </citation>
    <scope>INDUCTION</scope>
    <scope>FUNCTION</scope>
</reference>
<reference key="9">
    <citation type="journal article" date="2006" name="BMC Dev. Biol.">
        <title>Implantation serine proteinases heterodimerize and are critical in hatching and implantation.</title>
        <authorList>
            <person name="Sharma N."/>
            <person name="Liu S."/>
            <person name="Tang L."/>
            <person name="Irwin J."/>
            <person name="Meng G."/>
            <person name="Rancourt D.E."/>
        </authorList>
    </citation>
    <scope>SUBUNIT</scope>
    <scope>FUNCTION</scope>
</reference>
<comment type="function">
    <text evidence="4 7 9">Involved in embryo hatching and implantation.</text>
</comment>
<comment type="subunit">
    <text evidence="5 8 9">Homooligomer, heterodimer and heterotetramer. Able to form homo- and hetero- tetrameric structures. Heterotetramer is far more stable than the homotetramer.</text>
</comment>
<comment type="subcellular location">
    <subcellularLocation>
        <location evidence="5 8">Secreted</location>
    </subcellularLocation>
    <text>Secretion into the glandular and uterine lumen may occur as a consequence of progesterone-induced epithelial differentiation.</text>
</comment>
<comment type="tissue specificity">
    <text evidence="4 5">Expressed in embryos and placenta. Found in uterus especially in glandular epithelium during zona lysis and implantation.</text>
</comment>
<comment type="developmental stage">
    <text evidence="4 6 8">Highly expressed from 6.5 dpc plus deciduum. Also expressed, but to a lower extent, in placenta from 11.5 dpc and 13.5 dpc. Not expressed at 8.5 dpc and 11.5 dpc in embryo proper. Expressed at 4.0 dpc in uterus.</text>
</comment>
<comment type="induction">
    <text evidence="4 7 8">Up-regulated in uterine endometrial glands following the initiation of embryo implantation. By progesterone.</text>
</comment>
<comment type="similarity">
    <text evidence="3">Belongs to the peptidase S1 family.</text>
</comment>
<proteinExistence type="evidence at protein level"/>